<gene>
    <name evidence="1" type="primary">gmhA</name>
    <name type="ordered locus">Shewmr7_0259</name>
</gene>
<accession>Q0I041</accession>
<comment type="function">
    <text evidence="1">Catalyzes the isomerization of sedoheptulose 7-phosphate in D-glycero-D-manno-heptose 7-phosphate.</text>
</comment>
<comment type="catalytic activity">
    <reaction evidence="1">
        <text>2 D-sedoheptulose 7-phosphate = D-glycero-alpha-D-manno-heptose 7-phosphate + D-glycero-beta-D-manno-heptose 7-phosphate</text>
        <dbReference type="Rhea" id="RHEA:27489"/>
        <dbReference type="ChEBI" id="CHEBI:57483"/>
        <dbReference type="ChEBI" id="CHEBI:60203"/>
        <dbReference type="ChEBI" id="CHEBI:60204"/>
        <dbReference type="EC" id="5.3.1.28"/>
    </reaction>
</comment>
<comment type="cofactor">
    <cofactor evidence="1">
        <name>Zn(2+)</name>
        <dbReference type="ChEBI" id="CHEBI:29105"/>
    </cofactor>
    <text evidence="1">Binds 1 zinc ion per subunit.</text>
</comment>
<comment type="pathway">
    <text evidence="1">Carbohydrate biosynthesis; D-glycero-D-manno-heptose 7-phosphate biosynthesis; D-glycero-alpha-D-manno-heptose 7-phosphate and D-glycero-beta-D-manno-heptose 7-phosphate from sedoheptulose 7-phosphate: step 1/1.</text>
</comment>
<comment type="subunit">
    <text evidence="1">Homotetramer.</text>
</comment>
<comment type="subcellular location">
    <subcellularLocation>
        <location evidence="1">Cytoplasm</location>
    </subcellularLocation>
</comment>
<comment type="miscellaneous">
    <text evidence="1">The reaction produces a racemic mixture of D-glycero-alpha-D-manno-heptose 7-phosphate and D-glycero-beta-D-manno-heptose 7-phosphate.</text>
</comment>
<comment type="similarity">
    <text evidence="1">Belongs to the SIS family. GmhA subfamily.</text>
</comment>
<name>GMHA_SHESR</name>
<organism>
    <name type="scientific">Shewanella sp. (strain MR-7)</name>
    <dbReference type="NCBI Taxonomy" id="60481"/>
    <lineage>
        <taxon>Bacteria</taxon>
        <taxon>Pseudomonadati</taxon>
        <taxon>Pseudomonadota</taxon>
        <taxon>Gammaproteobacteria</taxon>
        <taxon>Alteromonadales</taxon>
        <taxon>Shewanellaceae</taxon>
        <taxon>Shewanella</taxon>
    </lineage>
</organism>
<feature type="chain" id="PRO_1000197028" description="Phosphoheptose isomerase">
    <location>
        <begin position="1"/>
        <end position="197"/>
    </location>
</feature>
<feature type="domain" description="SIS" evidence="1">
    <location>
        <begin position="34"/>
        <end position="196"/>
    </location>
</feature>
<feature type="binding site" evidence="1">
    <location>
        <begin position="49"/>
        <end position="51"/>
    </location>
    <ligand>
        <name>substrate</name>
    </ligand>
</feature>
<feature type="binding site" evidence="1">
    <location>
        <position position="58"/>
    </location>
    <ligand>
        <name>Zn(2+)</name>
        <dbReference type="ChEBI" id="CHEBI:29105"/>
    </ligand>
</feature>
<feature type="binding site" evidence="1">
    <location>
        <position position="62"/>
    </location>
    <ligand>
        <name>substrate</name>
    </ligand>
</feature>
<feature type="binding site" evidence="1">
    <location>
        <position position="62"/>
    </location>
    <ligand>
        <name>Zn(2+)</name>
        <dbReference type="ChEBI" id="CHEBI:29105"/>
    </ligand>
</feature>
<feature type="binding site" evidence="1">
    <location>
        <begin position="91"/>
        <end position="92"/>
    </location>
    <ligand>
        <name>substrate</name>
    </ligand>
</feature>
<feature type="binding site" evidence="1">
    <location>
        <begin position="117"/>
        <end position="119"/>
    </location>
    <ligand>
        <name>substrate</name>
    </ligand>
</feature>
<feature type="binding site" evidence="1">
    <location>
        <position position="122"/>
    </location>
    <ligand>
        <name>substrate</name>
    </ligand>
</feature>
<feature type="binding site" evidence="1">
    <location>
        <position position="172"/>
    </location>
    <ligand>
        <name>substrate</name>
    </ligand>
</feature>
<feature type="binding site" evidence="1">
    <location>
        <position position="172"/>
    </location>
    <ligand>
        <name>Zn(2+)</name>
        <dbReference type="ChEBI" id="CHEBI:29105"/>
    </ligand>
</feature>
<feature type="binding site" evidence="1">
    <location>
        <position position="180"/>
    </location>
    <ligand>
        <name>Zn(2+)</name>
        <dbReference type="ChEBI" id="CHEBI:29105"/>
    </ligand>
</feature>
<reference key="1">
    <citation type="submission" date="2006-08" db="EMBL/GenBank/DDBJ databases">
        <title>Complete sequence of chromosome 1 of Shewanella sp. MR-7.</title>
        <authorList>
            <person name="Copeland A."/>
            <person name="Lucas S."/>
            <person name="Lapidus A."/>
            <person name="Barry K."/>
            <person name="Detter J.C."/>
            <person name="Glavina del Rio T."/>
            <person name="Hammon N."/>
            <person name="Israni S."/>
            <person name="Dalin E."/>
            <person name="Tice H."/>
            <person name="Pitluck S."/>
            <person name="Kiss H."/>
            <person name="Brettin T."/>
            <person name="Bruce D."/>
            <person name="Han C."/>
            <person name="Tapia R."/>
            <person name="Gilna P."/>
            <person name="Schmutz J."/>
            <person name="Larimer F."/>
            <person name="Land M."/>
            <person name="Hauser L."/>
            <person name="Kyrpides N."/>
            <person name="Mikhailova N."/>
            <person name="Nealson K."/>
            <person name="Konstantinidis K."/>
            <person name="Klappenbach J."/>
            <person name="Tiedje J."/>
            <person name="Richardson P."/>
        </authorList>
    </citation>
    <scope>NUCLEOTIDE SEQUENCE [LARGE SCALE GENOMIC DNA]</scope>
    <source>
        <strain>MR-7</strain>
    </source>
</reference>
<dbReference type="EC" id="5.3.1.28" evidence="1"/>
<dbReference type="EMBL" id="CP000444">
    <property type="protein sequence ID" value="ABI41264.1"/>
    <property type="molecule type" value="Genomic_DNA"/>
</dbReference>
<dbReference type="SMR" id="Q0I041"/>
<dbReference type="KEGG" id="shm:Shewmr7_0259"/>
<dbReference type="HOGENOM" id="CLU_080999_4_0_6"/>
<dbReference type="UniPathway" id="UPA00041">
    <property type="reaction ID" value="UER00436"/>
</dbReference>
<dbReference type="GO" id="GO:0005737">
    <property type="term" value="C:cytoplasm"/>
    <property type="evidence" value="ECO:0007669"/>
    <property type="project" value="UniProtKB-SubCell"/>
</dbReference>
<dbReference type="GO" id="GO:0097367">
    <property type="term" value="F:carbohydrate derivative binding"/>
    <property type="evidence" value="ECO:0007669"/>
    <property type="project" value="InterPro"/>
</dbReference>
<dbReference type="GO" id="GO:0008968">
    <property type="term" value="F:D-sedoheptulose 7-phosphate isomerase activity"/>
    <property type="evidence" value="ECO:0007669"/>
    <property type="project" value="UniProtKB-UniRule"/>
</dbReference>
<dbReference type="GO" id="GO:0008270">
    <property type="term" value="F:zinc ion binding"/>
    <property type="evidence" value="ECO:0007669"/>
    <property type="project" value="UniProtKB-UniRule"/>
</dbReference>
<dbReference type="GO" id="GO:0005975">
    <property type="term" value="P:carbohydrate metabolic process"/>
    <property type="evidence" value="ECO:0007669"/>
    <property type="project" value="UniProtKB-UniRule"/>
</dbReference>
<dbReference type="GO" id="GO:2001061">
    <property type="term" value="P:D-glycero-D-manno-heptose 7-phosphate biosynthetic process"/>
    <property type="evidence" value="ECO:0007669"/>
    <property type="project" value="UniProtKB-UniPathway"/>
</dbReference>
<dbReference type="CDD" id="cd05006">
    <property type="entry name" value="SIS_GmhA"/>
    <property type="match status" value="1"/>
</dbReference>
<dbReference type="Gene3D" id="3.40.50.10490">
    <property type="entry name" value="Glucose-6-phosphate isomerase like protein, domain 1"/>
    <property type="match status" value="1"/>
</dbReference>
<dbReference type="HAMAP" id="MF_00067">
    <property type="entry name" value="GmhA"/>
    <property type="match status" value="1"/>
</dbReference>
<dbReference type="InterPro" id="IPR035461">
    <property type="entry name" value="GmhA/DiaA"/>
</dbReference>
<dbReference type="InterPro" id="IPR004515">
    <property type="entry name" value="Phosphoheptose_Isoase"/>
</dbReference>
<dbReference type="InterPro" id="IPR001347">
    <property type="entry name" value="SIS_dom"/>
</dbReference>
<dbReference type="InterPro" id="IPR046348">
    <property type="entry name" value="SIS_dom_sf"/>
</dbReference>
<dbReference type="InterPro" id="IPR050099">
    <property type="entry name" value="SIS_GmhA/DiaA_subfam"/>
</dbReference>
<dbReference type="NCBIfam" id="NF010546">
    <property type="entry name" value="PRK13936.1"/>
    <property type="match status" value="1"/>
</dbReference>
<dbReference type="PANTHER" id="PTHR30390:SF6">
    <property type="entry name" value="DNAA INITIATOR-ASSOCIATING PROTEIN DIAA"/>
    <property type="match status" value="1"/>
</dbReference>
<dbReference type="PANTHER" id="PTHR30390">
    <property type="entry name" value="SEDOHEPTULOSE 7-PHOSPHATE ISOMERASE / DNAA INITIATOR-ASSOCIATING FACTOR FOR REPLICATION INITIATION"/>
    <property type="match status" value="1"/>
</dbReference>
<dbReference type="Pfam" id="PF13580">
    <property type="entry name" value="SIS_2"/>
    <property type="match status" value="1"/>
</dbReference>
<dbReference type="SUPFAM" id="SSF53697">
    <property type="entry name" value="SIS domain"/>
    <property type="match status" value="1"/>
</dbReference>
<dbReference type="PROSITE" id="PS51464">
    <property type="entry name" value="SIS"/>
    <property type="match status" value="1"/>
</dbReference>
<sequence>MLERIKDSFTESIQTKIDAAEALPESIAKAAEMMVQCLLGGNKILACGNGGSAGDAQHFSAELLNRYEIERPPLPAIALSTDTSTITAIANDYSYDEIFSKQILALGQPGDILLAISTSGNSGNVIKAMEAALSRDMTIVALTGKDGGAMAGLLSVGDVEIRVPSNVTARIQEVHLLVIHCLCDNIDRTLFPQDEQQ</sequence>
<protein>
    <recommendedName>
        <fullName evidence="1">Phosphoheptose isomerase</fullName>
        <ecNumber evidence="1">5.3.1.28</ecNumber>
    </recommendedName>
    <alternativeName>
        <fullName evidence="1">Sedoheptulose 7-phosphate isomerase</fullName>
    </alternativeName>
</protein>
<evidence type="ECO:0000255" key="1">
    <source>
        <dbReference type="HAMAP-Rule" id="MF_00067"/>
    </source>
</evidence>
<proteinExistence type="inferred from homology"/>
<keyword id="KW-0119">Carbohydrate metabolism</keyword>
<keyword id="KW-0963">Cytoplasm</keyword>
<keyword id="KW-0413">Isomerase</keyword>
<keyword id="KW-0479">Metal-binding</keyword>
<keyword id="KW-0862">Zinc</keyword>